<sequence>MALTNADRAEIIAKFARAENDTGSPEVQVALLTAQINDLQGHFKAHKHDHHSRRGLIRMVNQRRKLLDYLNGKDHERYTALIGALGLRR</sequence>
<name>RS15_ACIB5</name>
<comment type="function">
    <text evidence="1">One of the primary rRNA binding proteins, it binds directly to 16S rRNA where it helps nucleate assembly of the platform of the 30S subunit by binding and bridging several RNA helices of the 16S rRNA.</text>
</comment>
<comment type="function">
    <text evidence="1">Forms an intersubunit bridge (bridge B4) with the 23S rRNA of the 50S subunit in the ribosome.</text>
</comment>
<comment type="subunit">
    <text evidence="1">Part of the 30S ribosomal subunit. Forms a bridge to the 50S subunit in the 70S ribosome, contacting the 23S rRNA.</text>
</comment>
<comment type="similarity">
    <text evidence="1">Belongs to the universal ribosomal protein uS15 family.</text>
</comment>
<organism>
    <name type="scientific">Acinetobacter baumannii (strain AB0057)</name>
    <dbReference type="NCBI Taxonomy" id="480119"/>
    <lineage>
        <taxon>Bacteria</taxon>
        <taxon>Pseudomonadati</taxon>
        <taxon>Pseudomonadota</taxon>
        <taxon>Gammaproteobacteria</taxon>
        <taxon>Moraxellales</taxon>
        <taxon>Moraxellaceae</taxon>
        <taxon>Acinetobacter</taxon>
        <taxon>Acinetobacter calcoaceticus/baumannii complex</taxon>
    </lineage>
</organism>
<accession>B7I3U0</accession>
<proteinExistence type="evidence at protein level"/>
<reference key="1">
    <citation type="journal article" date="2008" name="J. Bacteriol.">
        <title>Comparative genome sequence analysis of multidrug-resistant Acinetobacter baumannii.</title>
        <authorList>
            <person name="Adams M.D."/>
            <person name="Goglin K."/>
            <person name="Molyneaux N."/>
            <person name="Hujer K.M."/>
            <person name="Lavender H."/>
            <person name="Jamison J.J."/>
            <person name="MacDonald I.J."/>
            <person name="Martin K.M."/>
            <person name="Russo T."/>
            <person name="Campagnari A.A."/>
            <person name="Hujer A.M."/>
            <person name="Bonomo R.A."/>
            <person name="Gill S.R."/>
        </authorList>
    </citation>
    <scope>NUCLEOTIDE SEQUENCE [LARGE SCALE GENOMIC DNA]</scope>
    <source>
        <strain>AB0057</strain>
    </source>
</reference>
<protein>
    <recommendedName>
        <fullName evidence="1">Small ribosomal subunit protein uS15</fullName>
    </recommendedName>
    <alternativeName>
        <fullName evidence="2">30S ribosomal protein S15</fullName>
    </alternativeName>
</protein>
<keyword id="KW-0002">3D-structure</keyword>
<keyword id="KW-0687">Ribonucleoprotein</keyword>
<keyword id="KW-0689">Ribosomal protein</keyword>
<keyword id="KW-0694">RNA-binding</keyword>
<keyword id="KW-0699">rRNA-binding</keyword>
<evidence type="ECO:0000255" key="1">
    <source>
        <dbReference type="HAMAP-Rule" id="MF_01343"/>
    </source>
</evidence>
<evidence type="ECO:0000305" key="2"/>
<evidence type="ECO:0007829" key="3">
    <source>
        <dbReference type="PDB" id="7M4U"/>
    </source>
</evidence>
<dbReference type="EMBL" id="CP001182">
    <property type="protein sequence ID" value="ACJ39862.1"/>
    <property type="molecule type" value="Genomic_DNA"/>
</dbReference>
<dbReference type="RefSeq" id="WP_001229357.1">
    <property type="nucleotide sequence ID" value="NC_011586.2"/>
</dbReference>
<dbReference type="PDB" id="6V39">
    <property type="method" value="EM"/>
    <property type="resolution" value="3.04 A"/>
    <property type="chains" value="o=1-89"/>
</dbReference>
<dbReference type="PDB" id="6V3A">
    <property type="method" value="EM"/>
    <property type="resolution" value="2.82 A"/>
    <property type="chains" value="o=1-89"/>
</dbReference>
<dbReference type="PDB" id="6V3B">
    <property type="method" value="EM"/>
    <property type="resolution" value="2.91 A"/>
    <property type="chains" value="o=1-89"/>
</dbReference>
<dbReference type="PDB" id="6V3E">
    <property type="method" value="EM"/>
    <property type="resolution" value="4.40 A"/>
    <property type="chains" value="o=1-89"/>
</dbReference>
<dbReference type="PDB" id="7M4U">
    <property type="method" value="EM"/>
    <property type="resolution" value="2.71 A"/>
    <property type="chains" value="o=1-89"/>
</dbReference>
<dbReference type="PDB" id="7M4W">
    <property type="method" value="EM"/>
    <property type="resolution" value="2.55 A"/>
    <property type="chains" value="o=1-89"/>
</dbReference>
<dbReference type="PDB" id="7M4X">
    <property type="method" value="EM"/>
    <property type="resolution" value="2.66 A"/>
    <property type="chains" value="o=1-89"/>
</dbReference>
<dbReference type="PDB" id="7M4Y">
    <property type="method" value="EM"/>
    <property type="resolution" value="2.50 A"/>
    <property type="chains" value="o=1-89"/>
</dbReference>
<dbReference type="PDB" id="7M4Z">
    <property type="method" value="EM"/>
    <property type="resolution" value="2.92 A"/>
    <property type="chains" value="o=1-89"/>
</dbReference>
<dbReference type="PDB" id="7RYF">
    <property type="method" value="EM"/>
    <property type="resolution" value="2.65 A"/>
    <property type="chains" value="o=1-89"/>
</dbReference>
<dbReference type="PDB" id="7RYG">
    <property type="method" value="EM"/>
    <property type="resolution" value="2.38 A"/>
    <property type="chains" value="o=1-89"/>
</dbReference>
<dbReference type="PDB" id="7RYH">
    <property type="method" value="EM"/>
    <property type="resolution" value="2.43 A"/>
    <property type="chains" value="o=1-89"/>
</dbReference>
<dbReference type="PDB" id="7UVV">
    <property type="method" value="EM"/>
    <property type="resolution" value="2.50 A"/>
    <property type="chains" value="o=1-89"/>
</dbReference>
<dbReference type="PDB" id="7UVW">
    <property type="method" value="EM"/>
    <property type="resolution" value="2.37 A"/>
    <property type="chains" value="o=1-89"/>
</dbReference>
<dbReference type="PDB" id="7UVX">
    <property type="method" value="EM"/>
    <property type="resolution" value="2.35 A"/>
    <property type="chains" value="o=1-89"/>
</dbReference>
<dbReference type="PDB" id="7UVY">
    <property type="method" value="EM"/>
    <property type="resolution" value="2.39 A"/>
    <property type="chains" value="o=1-89"/>
</dbReference>
<dbReference type="PDB" id="7UVZ">
    <property type="method" value="EM"/>
    <property type="resolution" value="2.21 A"/>
    <property type="chains" value="o=1-89"/>
</dbReference>
<dbReference type="PDB" id="7UW1">
    <property type="method" value="EM"/>
    <property type="resolution" value="2.21 A"/>
    <property type="chains" value="o=1-89"/>
</dbReference>
<dbReference type="PDBsum" id="6V39"/>
<dbReference type="PDBsum" id="6V3A"/>
<dbReference type="PDBsum" id="6V3B"/>
<dbReference type="PDBsum" id="6V3E"/>
<dbReference type="PDBsum" id="7M4U"/>
<dbReference type="PDBsum" id="7M4W"/>
<dbReference type="PDBsum" id="7M4X"/>
<dbReference type="PDBsum" id="7M4Y"/>
<dbReference type="PDBsum" id="7M4Z"/>
<dbReference type="PDBsum" id="7RYF"/>
<dbReference type="PDBsum" id="7RYG"/>
<dbReference type="PDBsum" id="7RYH"/>
<dbReference type="PDBsum" id="7UVV"/>
<dbReference type="PDBsum" id="7UVW"/>
<dbReference type="PDBsum" id="7UVX"/>
<dbReference type="PDBsum" id="7UVY"/>
<dbReference type="PDBsum" id="7UVZ"/>
<dbReference type="PDBsum" id="7UW1"/>
<dbReference type="EMDB" id="EMD-21030"/>
<dbReference type="EMDB" id="EMD-21031"/>
<dbReference type="EMDB" id="EMD-21032"/>
<dbReference type="EMDB" id="EMD-21034"/>
<dbReference type="EMDB" id="EMD-23666"/>
<dbReference type="EMDB" id="EMD-23668"/>
<dbReference type="EMDB" id="EMD-23669"/>
<dbReference type="EMDB" id="EMD-23670"/>
<dbReference type="EMDB" id="EMD-23671"/>
<dbReference type="EMDB" id="EMD-24738"/>
<dbReference type="EMDB" id="EMD-24739"/>
<dbReference type="EMDB" id="EMD-24740"/>
<dbReference type="EMDB" id="EMD-26817"/>
<dbReference type="EMDB" id="EMD-26818"/>
<dbReference type="EMDB" id="EMD-26819"/>
<dbReference type="EMDB" id="EMD-26820"/>
<dbReference type="EMDB" id="EMD-26821"/>
<dbReference type="EMDB" id="EMD-26822"/>
<dbReference type="SMR" id="B7I3U0"/>
<dbReference type="IntAct" id="B7I3U0">
    <property type="interactions" value="1"/>
</dbReference>
<dbReference type="GeneID" id="92892353"/>
<dbReference type="KEGG" id="abn:AB57_0438"/>
<dbReference type="HOGENOM" id="CLU_148518_0_0_6"/>
<dbReference type="Proteomes" id="UP000007094">
    <property type="component" value="Chromosome"/>
</dbReference>
<dbReference type="GO" id="GO:0022627">
    <property type="term" value="C:cytosolic small ribosomal subunit"/>
    <property type="evidence" value="ECO:0007669"/>
    <property type="project" value="TreeGrafter"/>
</dbReference>
<dbReference type="GO" id="GO:0019843">
    <property type="term" value="F:rRNA binding"/>
    <property type="evidence" value="ECO:0007669"/>
    <property type="project" value="UniProtKB-UniRule"/>
</dbReference>
<dbReference type="GO" id="GO:0003735">
    <property type="term" value="F:structural constituent of ribosome"/>
    <property type="evidence" value="ECO:0007669"/>
    <property type="project" value="InterPro"/>
</dbReference>
<dbReference type="GO" id="GO:0006412">
    <property type="term" value="P:translation"/>
    <property type="evidence" value="ECO:0007669"/>
    <property type="project" value="UniProtKB-UniRule"/>
</dbReference>
<dbReference type="CDD" id="cd00353">
    <property type="entry name" value="Ribosomal_S15p_S13e"/>
    <property type="match status" value="1"/>
</dbReference>
<dbReference type="FunFam" id="1.10.287.10:FF:000002">
    <property type="entry name" value="30S ribosomal protein S15"/>
    <property type="match status" value="1"/>
</dbReference>
<dbReference type="Gene3D" id="6.10.250.3130">
    <property type="match status" value="1"/>
</dbReference>
<dbReference type="Gene3D" id="1.10.287.10">
    <property type="entry name" value="S15/NS1, RNA-binding"/>
    <property type="match status" value="1"/>
</dbReference>
<dbReference type="HAMAP" id="MF_01343_B">
    <property type="entry name" value="Ribosomal_uS15_B"/>
    <property type="match status" value="1"/>
</dbReference>
<dbReference type="InterPro" id="IPR000589">
    <property type="entry name" value="Ribosomal_uS15"/>
</dbReference>
<dbReference type="InterPro" id="IPR005290">
    <property type="entry name" value="Ribosomal_uS15_bac-type"/>
</dbReference>
<dbReference type="InterPro" id="IPR009068">
    <property type="entry name" value="uS15_NS1_RNA-bd_sf"/>
</dbReference>
<dbReference type="NCBIfam" id="TIGR00952">
    <property type="entry name" value="S15_bact"/>
    <property type="match status" value="1"/>
</dbReference>
<dbReference type="PANTHER" id="PTHR23321">
    <property type="entry name" value="RIBOSOMAL PROTEIN S15, BACTERIAL AND ORGANELLAR"/>
    <property type="match status" value="1"/>
</dbReference>
<dbReference type="PANTHER" id="PTHR23321:SF26">
    <property type="entry name" value="SMALL RIBOSOMAL SUBUNIT PROTEIN US15M"/>
    <property type="match status" value="1"/>
</dbReference>
<dbReference type="Pfam" id="PF00312">
    <property type="entry name" value="Ribosomal_S15"/>
    <property type="match status" value="1"/>
</dbReference>
<dbReference type="SMART" id="SM01387">
    <property type="entry name" value="Ribosomal_S15"/>
    <property type="match status" value="1"/>
</dbReference>
<dbReference type="SUPFAM" id="SSF47060">
    <property type="entry name" value="S15/NS1 RNA-binding domain"/>
    <property type="match status" value="1"/>
</dbReference>
<dbReference type="PROSITE" id="PS00362">
    <property type="entry name" value="RIBOSOMAL_S15"/>
    <property type="match status" value="1"/>
</dbReference>
<gene>
    <name evidence="1" type="primary">rpsO</name>
    <name type="ordered locus">AB57_0438</name>
</gene>
<feature type="chain" id="PRO_1000143059" description="Small ribosomal subunit protein uS15">
    <location>
        <begin position="1"/>
        <end position="89"/>
    </location>
</feature>
<feature type="helix" evidence="3">
    <location>
        <begin position="5"/>
        <end position="15"/>
    </location>
</feature>
<feature type="helix" evidence="3">
    <location>
        <begin position="25"/>
        <end position="45"/>
    </location>
</feature>
<feature type="helix" evidence="3">
    <location>
        <begin position="50"/>
        <end position="73"/>
    </location>
</feature>
<feature type="helix" evidence="3">
    <location>
        <begin position="75"/>
        <end position="85"/>
    </location>
</feature>